<feature type="chain" id="PRO_1000133284" description="Isocitrate dehydrogenase kinase/phosphatase">
    <location>
        <begin position="1"/>
        <end position="578"/>
    </location>
</feature>
<feature type="active site" evidence="1">
    <location>
        <position position="371"/>
    </location>
</feature>
<feature type="binding site" evidence="1">
    <location>
        <begin position="315"/>
        <end position="321"/>
    </location>
    <ligand>
        <name>ATP</name>
        <dbReference type="ChEBI" id="CHEBI:30616"/>
    </ligand>
</feature>
<feature type="binding site" evidence="1">
    <location>
        <position position="336"/>
    </location>
    <ligand>
        <name>ATP</name>
        <dbReference type="ChEBI" id="CHEBI:30616"/>
    </ligand>
</feature>
<sequence length="578" mass="67586">MPRGLELLIAQTILQGFDAQYGRFLEVTSGAQQRFEQADWHAVQLAMKNRIHLYDHHVGLVVEQLRCITNGQSTDAAFLLRVKEHYTRLLPDYPRFEIAESFFNSVYCRLFDHRSLTPERLFIFSSQPERSFRTIPRPLAKDFHPDHGWESLLMRVISDLPLRLRWQNKSRDIHYIIRHLTETLGTDNLAESHLQVANELFYRNKAAWLVGKLITPSGTLPFLLPIHQTDDGELFIDTCLTTTAEASIVFGFARSYFMVYAPLPAALVEWLREILPGKTTAELYMAIGCQKHAKTESYREYLVYLQGCNEQFIEAPGIRGMVMLVFTLPGFDRVFKVIKDKFAPQKEMSAAHVRACYQLVKEHDRVGRMADTQEFENFVLEKRHISPALMELLLQEAAEKITDLGEQIVIRHLYIERRMVPLNIWLEQVEGQQLRDAIEEYGNAIRQLAAANIFPGDMLFKNFGVTRHGRVVFYDYDEICYMTEVNFRDIPPPRYPEDELASEPWYSVSPGDVFPEEFRHWLCADPRIGPLFEEMHADLFRADYWRALQNRIREGHVEDVYAYRRRQRFSVRYGEMLF</sequence>
<dbReference type="EC" id="2.7.11.5" evidence="1"/>
<dbReference type="EC" id="3.1.3.-" evidence="1"/>
<dbReference type="EMBL" id="CP001063">
    <property type="protein sequence ID" value="ACD09127.1"/>
    <property type="molecule type" value="Genomic_DNA"/>
</dbReference>
<dbReference type="RefSeq" id="WP_001137202.1">
    <property type="nucleotide sequence ID" value="NC_010658.1"/>
</dbReference>
<dbReference type="SMR" id="B2TWJ8"/>
<dbReference type="STRING" id="344609.SbBS512_E4511"/>
<dbReference type="KEGG" id="sbc:SbBS512_E4511"/>
<dbReference type="HOGENOM" id="CLU_033804_1_1_6"/>
<dbReference type="Proteomes" id="UP000001030">
    <property type="component" value="Chromosome"/>
</dbReference>
<dbReference type="GO" id="GO:0005737">
    <property type="term" value="C:cytoplasm"/>
    <property type="evidence" value="ECO:0007669"/>
    <property type="project" value="UniProtKB-SubCell"/>
</dbReference>
<dbReference type="GO" id="GO:0008772">
    <property type="term" value="F:[isocitrate dehydrogenase (NADP+)] kinase activity"/>
    <property type="evidence" value="ECO:0007669"/>
    <property type="project" value="UniProtKB-UniRule"/>
</dbReference>
<dbReference type="GO" id="GO:0016208">
    <property type="term" value="F:AMP binding"/>
    <property type="evidence" value="ECO:0007669"/>
    <property type="project" value="TreeGrafter"/>
</dbReference>
<dbReference type="GO" id="GO:0005524">
    <property type="term" value="F:ATP binding"/>
    <property type="evidence" value="ECO:0007669"/>
    <property type="project" value="UniProtKB-UniRule"/>
</dbReference>
<dbReference type="GO" id="GO:0004721">
    <property type="term" value="F:phosphoprotein phosphatase activity"/>
    <property type="evidence" value="ECO:0007669"/>
    <property type="project" value="UniProtKB-KW"/>
</dbReference>
<dbReference type="GO" id="GO:0004674">
    <property type="term" value="F:protein serine/threonine kinase activity"/>
    <property type="evidence" value="ECO:0007669"/>
    <property type="project" value="UniProtKB-KW"/>
</dbReference>
<dbReference type="GO" id="GO:0006006">
    <property type="term" value="P:glucose metabolic process"/>
    <property type="evidence" value="ECO:0007669"/>
    <property type="project" value="InterPro"/>
</dbReference>
<dbReference type="GO" id="GO:0006097">
    <property type="term" value="P:glyoxylate cycle"/>
    <property type="evidence" value="ECO:0007669"/>
    <property type="project" value="UniProtKB-UniRule"/>
</dbReference>
<dbReference type="GO" id="GO:0006099">
    <property type="term" value="P:tricarboxylic acid cycle"/>
    <property type="evidence" value="ECO:0007669"/>
    <property type="project" value="UniProtKB-UniRule"/>
</dbReference>
<dbReference type="HAMAP" id="MF_00747">
    <property type="entry name" value="AceK"/>
    <property type="match status" value="1"/>
</dbReference>
<dbReference type="InterPro" id="IPR046855">
    <property type="entry name" value="AceK_kinase"/>
</dbReference>
<dbReference type="InterPro" id="IPR046854">
    <property type="entry name" value="AceK_regulatory"/>
</dbReference>
<dbReference type="InterPro" id="IPR010452">
    <property type="entry name" value="Isocitrate_DH_AceK"/>
</dbReference>
<dbReference type="NCBIfam" id="NF002804">
    <property type="entry name" value="PRK02946.1"/>
    <property type="match status" value="1"/>
</dbReference>
<dbReference type="PANTHER" id="PTHR39559">
    <property type="match status" value="1"/>
</dbReference>
<dbReference type="PANTHER" id="PTHR39559:SF1">
    <property type="entry name" value="ISOCITRATE DEHYDROGENASE KINASE_PHOSPHATASE"/>
    <property type="match status" value="1"/>
</dbReference>
<dbReference type="Pfam" id="PF06315">
    <property type="entry name" value="AceK_kinase"/>
    <property type="match status" value="1"/>
</dbReference>
<dbReference type="Pfam" id="PF20423">
    <property type="entry name" value="AceK_regulatory"/>
    <property type="match status" value="1"/>
</dbReference>
<dbReference type="PIRSF" id="PIRSF000719">
    <property type="entry name" value="AceK"/>
    <property type="match status" value="1"/>
</dbReference>
<comment type="function">
    <text evidence="1">Bifunctional enzyme which can phosphorylate or dephosphorylate isocitrate dehydrogenase (IDH) on a specific serine residue. This is a regulatory mechanism which enables bacteria to bypass the Krebs cycle via the glyoxylate shunt in response to the source of carbon. When bacteria are grown on glucose, IDH is fully active and unphosphorylated, but when grown on acetate or ethanol, the activity of IDH declines drastically concomitant with its phosphorylation.</text>
</comment>
<comment type="catalytic activity">
    <reaction evidence="1">
        <text>L-seryl-[isocitrate dehydrogenase] + ATP = O-phospho-L-seryl-[isocitrate dehydrogenase] + ADP + H(+)</text>
        <dbReference type="Rhea" id="RHEA:43540"/>
        <dbReference type="Rhea" id="RHEA-COMP:10605"/>
        <dbReference type="Rhea" id="RHEA-COMP:10606"/>
        <dbReference type="ChEBI" id="CHEBI:15378"/>
        <dbReference type="ChEBI" id="CHEBI:29999"/>
        <dbReference type="ChEBI" id="CHEBI:30616"/>
        <dbReference type="ChEBI" id="CHEBI:83421"/>
        <dbReference type="ChEBI" id="CHEBI:456216"/>
        <dbReference type="EC" id="2.7.11.5"/>
    </reaction>
</comment>
<comment type="subcellular location">
    <subcellularLocation>
        <location evidence="1">Cytoplasm</location>
    </subcellularLocation>
</comment>
<comment type="similarity">
    <text evidence="1">Belongs to the AceK family.</text>
</comment>
<reference key="1">
    <citation type="submission" date="2008-05" db="EMBL/GenBank/DDBJ databases">
        <title>Complete sequence of Shigella boydii serotype 18 strain BS512.</title>
        <authorList>
            <person name="Rasko D.A."/>
            <person name="Rosovitz M."/>
            <person name="Maurelli A.T."/>
            <person name="Myers G."/>
            <person name="Seshadri R."/>
            <person name="Cer R."/>
            <person name="Jiang L."/>
            <person name="Ravel J."/>
            <person name="Sebastian Y."/>
        </authorList>
    </citation>
    <scope>NUCLEOTIDE SEQUENCE [LARGE SCALE GENOMIC DNA]</scope>
    <source>
        <strain>CDC 3083-94 / BS512</strain>
    </source>
</reference>
<gene>
    <name evidence="1" type="primary">aceK</name>
    <name type="ordered locus">SbBS512_E4511</name>
</gene>
<proteinExistence type="inferred from homology"/>
<protein>
    <recommendedName>
        <fullName evidence="1">Isocitrate dehydrogenase kinase/phosphatase</fullName>
        <shortName evidence="1">IDH kinase/phosphatase</shortName>
        <shortName evidence="1">IDHK/P</shortName>
        <ecNumber evidence="1">2.7.11.5</ecNumber>
        <ecNumber evidence="1">3.1.3.-</ecNumber>
    </recommendedName>
</protein>
<name>ACEK_SHIB3</name>
<evidence type="ECO:0000255" key="1">
    <source>
        <dbReference type="HAMAP-Rule" id="MF_00747"/>
    </source>
</evidence>
<accession>B2TWJ8</accession>
<keyword id="KW-0067">ATP-binding</keyword>
<keyword id="KW-0963">Cytoplasm</keyword>
<keyword id="KW-0329">Glyoxylate bypass</keyword>
<keyword id="KW-0378">Hydrolase</keyword>
<keyword id="KW-0418">Kinase</keyword>
<keyword id="KW-0547">Nucleotide-binding</keyword>
<keyword id="KW-0904">Protein phosphatase</keyword>
<keyword id="KW-1185">Reference proteome</keyword>
<keyword id="KW-0723">Serine/threonine-protein kinase</keyword>
<keyword id="KW-0808">Transferase</keyword>
<keyword id="KW-0816">Tricarboxylic acid cycle</keyword>
<organism>
    <name type="scientific">Shigella boydii serotype 18 (strain CDC 3083-94 / BS512)</name>
    <dbReference type="NCBI Taxonomy" id="344609"/>
    <lineage>
        <taxon>Bacteria</taxon>
        <taxon>Pseudomonadati</taxon>
        <taxon>Pseudomonadota</taxon>
        <taxon>Gammaproteobacteria</taxon>
        <taxon>Enterobacterales</taxon>
        <taxon>Enterobacteriaceae</taxon>
        <taxon>Shigella</taxon>
    </lineage>
</organism>